<organism>
    <name type="scientific">Saccharophagus degradans (strain 2-40 / ATCC 43961 / DSM 17024)</name>
    <dbReference type="NCBI Taxonomy" id="203122"/>
    <lineage>
        <taxon>Bacteria</taxon>
        <taxon>Pseudomonadati</taxon>
        <taxon>Pseudomonadota</taxon>
        <taxon>Gammaproteobacteria</taxon>
        <taxon>Cellvibrionales</taxon>
        <taxon>Cellvibrionaceae</taxon>
        <taxon>Saccharophagus</taxon>
    </lineage>
</organism>
<sequence length="150" mass="16951">MKVSAAARGRARHFAMQALYQWEMSGNALHVIEAEFHTDNDMSKVDVEYFHEILHGVAAIKSTLDETFKPFLTGLRLDEIDPVSLAVLRQACYEFEKRVDVPYKVVINEAVNLAKKFGAADSHKFINGVLDKVALRVRKDEVEAMRTGRS</sequence>
<protein>
    <recommendedName>
        <fullName evidence="1">Transcription antitermination protein NusB</fullName>
    </recommendedName>
    <alternativeName>
        <fullName evidence="1">Antitermination factor NusB</fullName>
    </alternativeName>
</protein>
<gene>
    <name evidence="1" type="primary">nusB</name>
    <name type="ordered locus">Sde_3454</name>
</gene>
<accession>Q21F20</accession>
<proteinExistence type="inferred from homology"/>
<reference key="1">
    <citation type="journal article" date="2008" name="PLoS Genet.">
        <title>Complete genome sequence of the complex carbohydrate-degrading marine bacterium, Saccharophagus degradans strain 2-40 T.</title>
        <authorList>
            <person name="Weiner R.M."/>
            <person name="Taylor L.E. II"/>
            <person name="Henrissat B."/>
            <person name="Hauser L."/>
            <person name="Land M."/>
            <person name="Coutinho P.M."/>
            <person name="Rancurel C."/>
            <person name="Saunders E.H."/>
            <person name="Longmire A.G."/>
            <person name="Zhang H."/>
            <person name="Bayer E.A."/>
            <person name="Gilbert H.J."/>
            <person name="Larimer F."/>
            <person name="Zhulin I.B."/>
            <person name="Ekborg N.A."/>
            <person name="Lamed R."/>
            <person name="Richardson P.M."/>
            <person name="Borovok I."/>
            <person name="Hutcheson S."/>
        </authorList>
    </citation>
    <scope>NUCLEOTIDE SEQUENCE [LARGE SCALE GENOMIC DNA]</scope>
    <source>
        <strain>2-40 / ATCC 43961 / DSM 17024</strain>
    </source>
</reference>
<feature type="chain" id="PRO_0000265584" description="Transcription antitermination protein NusB">
    <location>
        <begin position="1"/>
        <end position="150"/>
    </location>
</feature>
<keyword id="KW-1185">Reference proteome</keyword>
<keyword id="KW-0694">RNA-binding</keyword>
<keyword id="KW-0804">Transcription</keyword>
<keyword id="KW-0889">Transcription antitermination</keyword>
<keyword id="KW-0805">Transcription regulation</keyword>
<name>NUSB_SACD2</name>
<comment type="function">
    <text evidence="1">Involved in transcription antitermination. Required for transcription of ribosomal RNA (rRNA) genes. Binds specifically to the boxA antiterminator sequence of the ribosomal RNA (rrn) operons.</text>
</comment>
<comment type="similarity">
    <text evidence="1">Belongs to the NusB family.</text>
</comment>
<evidence type="ECO:0000255" key="1">
    <source>
        <dbReference type="HAMAP-Rule" id="MF_00073"/>
    </source>
</evidence>
<dbReference type="EMBL" id="CP000282">
    <property type="protein sequence ID" value="ABD82709.1"/>
    <property type="molecule type" value="Genomic_DNA"/>
</dbReference>
<dbReference type="RefSeq" id="WP_011469925.1">
    <property type="nucleotide sequence ID" value="NC_007912.1"/>
</dbReference>
<dbReference type="SMR" id="Q21F20"/>
<dbReference type="STRING" id="203122.Sde_3454"/>
<dbReference type="GeneID" id="98615069"/>
<dbReference type="KEGG" id="sde:Sde_3454"/>
<dbReference type="eggNOG" id="COG0781">
    <property type="taxonomic scope" value="Bacteria"/>
</dbReference>
<dbReference type="HOGENOM" id="CLU_087843_4_1_6"/>
<dbReference type="OrthoDB" id="9789556at2"/>
<dbReference type="Proteomes" id="UP000001947">
    <property type="component" value="Chromosome"/>
</dbReference>
<dbReference type="GO" id="GO:0005829">
    <property type="term" value="C:cytosol"/>
    <property type="evidence" value="ECO:0007669"/>
    <property type="project" value="TreeGrafter"/>
</dbReference>
<dbReference type="GO" id="GO:0003723">
    <property type="term" value="F:RNA binding"/>
    <property type="evidence" value="ECO:0007669"/>
    <property type="project" value="UniProtKB-UniRule"/>
</dbReference>
<dbReference type="GO" id="GO:0006353">
    <property type="term" value="P:DNA-templated transcription termination"/>
    <property type="evidence" value="ECO:0007669"/>
    <property type="project" value="UniProtKB-UniRule"/>
</dbReference>
<dbReference type="GO" id="GO:0031564">
    <property type="term" value="P:transcription antitermination"/>
    <property type="evidence" value="ECO:0007669"/>
    <property type="project" value="UniProtKB-KW"/>
</dbReference>
<dbReference type="Gene3D" id="1.10.940.10">
    <property type="entry name" value="NusB-like"/>
    <property type="match status" value="1"/>
</dbReference>
<dbReference type="HAMAP" id="MF_00073">
    <property type="entry name" value="NusB"/>
    <property type="match status" value="1"/>
</dbReference>
<dbReference type="InterPro" id="IPR035926">
    <property type="entry name" value="NusB-like_sf"/>
</dbReference>
<dbReference type="InterPro" id="IPR011605">
    <property type="entry name" value="NusB_fam"/>
</dbReference>
<dbReference type="InterPro" id="IPR006027">
    <property type="entry name" value="NusB_RsmB_TIM44"/>
</dbReference>
<dbReference type="NCBIfam" id="TIGR01951">
    <property type="entry name" value="nusB"/>
    <property type="match status" value="1"/>
</dbReference>
<dbReference type="PANTHER" id="PTHR11078:SF3">
    <property type="entry name" value="ANTITERMINATION NUSB DOMAIN-CONTAINING PROTEIN"/>
    <property type="match status" value="1"/>
</dbReference>
<dbReference type="PANTHER" id="PTHR11078">
    <property type="entry name" value="N UTILIZATION SUBSTANCE PROTEIN B-RELATED"/>
    <property type="match status" value="1"/>
</dbReference>
<dbReference type="Pfam" id="PF01029">
    <property type="entry name" value="NusB"/>
    <property type="match status" value="1"/>
</dbReference>
<dbReference type="SUPFAM" id="SSF48013">
    <property type="entry name" value="NusB-like"/>
    <property type="match status" value="1"/>
</dbReference>